<protein>
    <recommendedName>
        <fullName>Stage III sporulation protein AD</fullName>
    </recommendedName>
</protein>
<evidence type="ECO:0000255" key="1"/>
<evidence type="ECO:0000305" key="2"/>
<comment type="subcellular location">
    <subcellularLocation>
        <location evidence="2">Cell membrane</location>
        <topology evidence="2">Multi-pass membrane protein</topology>
    </subcellularLocation>
</comment>
<reference key="1">
    <citation type="submission" date="1995-09" db="EMBL/GenBank/DDBJ databases">
        <authorList>
            <person name="Guerout-Fleury A.M."/>
            <person name="Gonzy-Treboul G."/>
            <person name="Stragier P."/>
        </authorList>
    </citation>
    <scope>NUCLEOTIDE SEQUENCE [GENOMIC DNA]</scope>
    <source>
        <strain>168 / JH642</strain>
    </source>
</reference>
<reference key="2">
    <citation type="journal article" date="1996" name="Microbiology">
        <title>Systematic sequencing of the 283 kb 210 degrees-232 degrees region of the Bacillus subtilis genome containing the skin element and many sporulation genes.</title>
        <authorList>
            <person name="Mizuno M."/>
            <person name="Masuda S."/>
            <person name="Takemaru K."/>
            <person name="Hosono S."/>
            <person name="Sato T."/>
            <person name="Takeuchi M."/>
            <person name="Kobayashi Y."/>
        </authorList>
    </citation>
    <scope>NUCLEOTIDE SEQUENCE [GENOMIC DNA]</scope>
    <source>
        <strain>168 / JH642</strain>
    </source>
</reference>
<reference key="3">
    <citation type="journal article" date="1997" name="Nature">
        <title>The complete genome sequence of the Gram-positive bacterium Bacillus subtilis.</title>
        <authorList>
            <person name="Kunst F."/>
            <person name="Ogasawara N."/>
            <person name="Moszer I."/>
            <person name="Albertini A.M."/>
            <person name="Alloni G."/>
            <person name="Azevedo V."/>
            <person name="Bertero M.G."/>
            <person name="Bessieres P."/>
            <person name="Bolotin A."/>
            <person name="Borchert S."/>
            <person name="Borriss R."/>
            <person name="Boursier L."/>
            <person name="Brans A."/>
            <person name="Braun M."/>
            <person name="Brignell S.C."/>
            <person name="Bron S."/>
            <person name="Brouillet S."/>
            <person name="Bruschi C.V."/>
            <person name="Caldwell B."/>
            <person name="Capuano V."/>
            <person name="Carter N.M."/>
            <person name="Choi S.-K."/>
            <person name="Codani J.-J."/>
            <person name="Connerton I.F."/>
            <person name="Cummings N.J."/>
            <person name="Daniel R.A."/>
            <person name="Denizot F."/>
            <person name="Devine K.M."/>
            <person name="Duesterhoeft A."/>
            <person name="Ehrlich S.D."/>
            <person name="Emmerson P.T."/>
            <person name="Entian K.-D."/>
            <person name="Errington J."/>
            <person name="Fabret C."/>
            <person name="Ferrari E."/>
            <person name="Foulger D."/>
            <person name="Fritz C."/>
            <person name="Fujita M."/>
            <person name="Fujita Y."/>
            <person name="Fuma S."/>
            <person name="Galizzi A."/>
            <person name="Galleron N."/>
            <person name="Ghim S.-Y."/>
            <person name="Glaser P."/>
            <person name="Goffeau A."/>
            <person name="Golightly E.J."/>
            <person name="Grandi G."/>
            <person name="Guiseppi G."/>
            <person name="Guy B.J."/>
            <person name="Haga K."/>
            <person name="Haiech J."/>
            <person name="Harwood C.R."/>
            <person name="Henaut A."/>
            <person name="Hilbert H."/>
            <person name="Holsappel S."/>
            <person name="Hosono S."/>
            <person name="Hullo M.-F."/>
            <person name="Itaya M."/>
            <person name="Jones L.-M."/>
            <person name="Joris B."/>
            <person name="Karamata D."/>
            <person name="Kasahara Y."/>
            <person name="Klaerr-Blanchard M."/>
            <person name="Klein C."/>
            <person name="Kobayashi Y."/>
            <person name="Koetter P."/>
            <person name="Koningstein G."/>
            <person name="Krogh S."/>
            <person name="Kumano M."/>
            <person name="Kurita K."/>
            <person name="Lapidus A."/>
            <person name="Lardinois S."/>
            <person name="Lauber J."/>
            <person name="Lazarevic V."/>
            <person name="Lee S.-M."/>
            <person name="Levine A."/>
            <person name="Liu H."/>
            <person name="Masuda S."/>
            <person name="Mauel C."/>
            <person name="Medigue C."/>
            <person name="Medina N."/>
            <person name="Mellado R.P."/>
            <person name="Mizuno M."/>
            <person name="Moestl D."/>
            <person name="Nakai S."/>
            <person name="Noback M."/>
            <person name="Noone D."/>
            <person name="O'Reilly M."/>
            <person name="Ogawa K."/>
            <person name="Ogiwara A."/>
            <person name="Oudega B."/>
            <person name="Park S.-H."/>
            <person name="Parro V."/>
            <person name="Pohl T.M."/>
            <person name="Portetelle D."/>
            <person name="Porwollik S."/>
            <person name="Prescott A.M."/>
            <person name="Presecan E."/>
            <person name="Pujic P."/>
            <person name="Purnelle B."/>
            <person name="Rapoport G."/>
            <person name="Rey M."/>
            <person name="Reynolds S."/>
            <person name="Rieger M."/>
            <person name="Rivolta C."/>
            <person name="Rocha E."/>
            <person name="Roche B."/>
            <person name="Rose M."/>
            <person name="Sadaie Y."/>
            <person name="Sato T."/>
            <person name="Scanlan E."/>
            <person name="Schleich S."/>
            <person name="Schroeter R."/>
            <person name="Scoffone F."/>
            <person name="Sekiguchi J."/>
            <person name="Sekowska A."/>
            <person name="Seror S.J."/>
            <person name="Serror P."/>
            <person name="Shin B.-S."/>
            <person name="Soldo B."/>
            <person name="Sorokin A."/>
            <person name="Tacconi E."/>
            <person name="Takagi T."/>
            <person name="Takahashi H."/>
            <person name="Takemaru K."/>
            <person name="Takeuchi M."/>
            <person name="Tamakoshi A."/>
            <person name="Tanaka T."/>
            <person name="Terpstra P."/>
            <person name="Tognoni A."/>
            <person name="Tosato V."/>
            <person name="Uchiyama S."/>
            <person name="Vandenbol M."/>
            <person name="Vannier F."/>
            <person name="Vassarotti A."/>
            <person name="Viari A."/>
            <person name="Wambutt R."/>
            <person name="Wedler E."/>
            <person name="Wedler H."/>
            <person name="Weitzenegger T."/>
            <person name="Winters P."/>
            <person name="Wipat A."/>
            <person name="Yamamoto H."/>
            <person name="Yamane K."/>
            <person name="Yasumoto K."/>
            <person name="Yata K."/>
            <person name="Yoshida K."/>
            <person name="Yoshikawa H.-F."/>
            <person name="Zumstein E."/>
            <person name="Yoshikawa H."/>
            <person name="Danchin A."/>
        </authorList>
    </citation>
    <scope>NUCLEOTIDE SEQUENCE [LARGE SCALE GENOMIC DNA]</scope>
    <source>
        <strain>168</strain>
    </source>
</reference>
<accession>P49781</accession>
<gene>
    <name type="primary">spoIIIAD</name>
    <name type="ordered locus">BSU24400</name>
</gene>
<sequence length="133" mass="14410">MQIDIVQIVGLGLIATFLSLIVKEQKPTFAFLIVVFAGCAIFLYLVDQIYDIIRMIEKIAINANVNMVYVETILKIIGIAYIAEFGAQLTKDAGQGAIASKIELAGKILILVMAVPILTVIIETILGLIPSMS</sequence>
<feature type="chain" id="PRO_0000072068" description="Stage III sporulation protein AD">
    <location>
        <begin position="1"/>
        <end position="133"/>
    </location>
</feature>
<feature type="transmembrane region" description="Helical" evidence="1">
    <location>
        <begin position="2"/>
        <end position="22"/>
    </location>
</feature>
<feature type="transmembrane region" description="Helical" evidence="1">
    <location>
        <begin position="29"/>
        <end position="49"/>
    </location>
</feature>
<feature type="transmembrane region" description="Helical" evidence="1">
    <location>
        <begin position="108"/>
        <end position="128"/>
    </location>
</feature>
<keyword id="KW-1003">Cell membrane</keyword>
<keyword id="KW-0472">Membrane</keyword>
<keyword id="KW-1185">Reference proteome</keyword>
<keyword id="KW-0749">Sporulation</keyword>
<keyword id="KW-0812">Transmembrane</keyword>
<keyword id="KW-1133">Transmembrane helix</keyword>
<dbReference type="EMBL" id="U35252">
    <property type="protein sequence ID" value="AAA76723.1"/>
    <property type="molecule type" value="Genomic_DNA"/>
</dbReference>
<dbReference type="EMBL" id="D84432">
    <property type="protein sequence ID" value="BAA12563.1"/>
    <property type="molecule type" value="Genomic_DNA"/>
</dbReference>
<dbReference type="EMBL" id="AL009126">
    <property type="protein sequence ID" value="CAB14371.1"/>
    <property type="molecule type" value="Genomic_DNA"/>
</dbReference>
<dbReference type="PIR" id="G69711">
    <property type="entry name" value="G69711"/>
</dbReference>
<dbReference type="RefSeq" id="NP_390320.1">
    <property type="nucleotide sequence ID" value="NC_000964.3"/>
</dbReference>
<dbReference type="RefSeq" id="WP_003230228.1">
    <property type="nucleotide sequence ID" value="NZ_OZ025638.1"/>
</dbReference>
<dbReference type="FunCoup" id="P49781">
    <property type="interactions" value="87"/>
</dbReference>
<dbReference type="STRING" id="224308.BSU24400"/>
<dbReference type="TCDB" id="9.B.70.1.1">
    <property type="family name" value="the multicomponent putative spoiiiae exporter (spoiiia-e) family"/>
</dbReference>
<dbReference type="PaxDb" id="224308-BSU24400"/>
<dbReference type="EnsemblBacteria" id="CAB14371">
    <property type="protein sequence ID" value="CAB14371"/>
    <property type="gene ID" value="BSU_24400"/>
</dbReference>
<dbReference type="GeneID" id="76987364"/>
<dbReference type="GeneID" id="938577"/>
<dbReference type="KEGG" id="bsu:BSU24400"/>
<dbReference type="PATRIC" id="fig|224308.43.peg.2547"/>
<dbReference type="eggNOG" id="ENOG5032SJW">
    <property type="taxonomic scope" value="Bacteria"/>
</dbReference>
<dbReference type="InParanoid" id="P49781"/>
<dbReference type="OrthoDB" id="1682150at2"/>
<dbReference type="PhylomeDB" id="P49781"/>
<dbReference type="BioCyc" id="BSUB:BSU24400-MONOMER"/>
<dbReference type="Proteomes" id="UP000001570">
    <property type="component" value="Chromosome"/>
</dbReference>
<dbReference type="GO" id="GO:0005886">
    <property type="term" value="C:plasma membrane"/>
    <property type="evidence" value="ECO:0007669"/>
    <property type="project" value="UniProtKB-SubCell"/>
</dbReference>
<dbReference type="GO" id="GO:0030435">
    <property type="term" value="P:sporulation resulting in formation of a cellular spore"/>
    <property type="evidence" value="ECO:0007669"/>
    <property type="project" value="UniProtKB-KW"/>
</dbReference>
<dbReference type="InterPro" id="IPR025664">
    <property type="entry name" value="Spore_III_AC/AD"/>
</dbReference>
<dbReference type="InterPro" id="IPR014211">
    <property type="entry name" value="Spore_III_AD"/>
</dbReference>
<dbReference type="NCBIfam" id="TIGR02849">
    <property type="entry name" value="spore_III_AD"/>
    <property type="match status" value="1"/>
</dbReference>
<dbReference type="Pfam" id="PF06686">
    <property type="entry name" value="SpoIIIAC"/>
    <property type="match status" value="2"/>
</dbReference>
<proteinExistence type="predicted"/>
<name>SP3AD_BACSU</name>
<organism>
    <name type="scientific">Bacillus subtilis (strain 168)</name>
    <dbReference type="NCBI Taxonomy" id="224308"/>
    <lineage>
        <taxon>Bacteria</taxon>
        <taxon>Bacillati</taxon>
        <taxon>Bacillota</taxon>
        <taxon>Bacilli</taxon>
        <taxon>Bacillales</taxon>
        <taxon>Bacillaceae</taxon>
        <taxon>Bacillus</taxon>
    </lineage>
</organism>